<protein>
    <recommendedName>
        <fullName evidence="1">Glutamine synthetase</fullName>
        <shortName evidence="1">GS</shortName>
        <ecNumber evidence="1">6.3.1.2</ecNumber>
    </recommendedName>
    <alternativeName>
        <fullName evidence="8">Glutamate--ammonia ligase</fullName>
    </alternativeName>
    <alternativeName>
        <fullName evidence="1">Glutamine synthetase I beta</fullName>
        <shortName evidence="1">GSI beta</shortName>
    </alternativeName>
</protein>
<proteinExistence type="inferred from homology"/>
<keyword id="KW-0067">ATP-binding</keyword>
<keyword id="KW-0963">Cytoplasm</keyword>
<keyword id="KW-0436">Ligase</keyword>
<keyword id="KW-0460">Magnesium</keyword>
<keyword id="KW-0479">Metal-binding</keyword>
<keyword id="KW-0547">Nucleotide-binding</keyword>
<keyword id="KW-0597">Phosphoprotein</keyword>
<keyword id="KW-1185">Reference proteome</keyword>
<sequence length="469" mass="52089">MTPKDVLQIIKEKEVRYVDLRFADTRGKEQHVTVPASTIDEAAFEEGKMFDGSSIAGWKGINESDMILMPDASTAVMDPFFDDPTLILRCDIVEPATMQGYERDPRSIAKRAEAYMKSTGIADTALFGPENEFFIFDDVRWGANMSGSFYKVDSEEAGWNSEKVYEDGNIGHRPGVKGGYFPVPPVDSFQDLRSAMCNTLEDMGMVVEVHHHEVATAGQCEIGVRCNTLVKKADEVLLLKYAVQNVAHAYGKTATFMPKPLVGDNGNGMHVHQSLAKDGKNLFSGDLYGGLSETALHYIGGIIKHAKALNAFCNASTNSYKRLVPGFEAPVMLAYSARNRSASIRIPYVMNPKARRIEVRFPDSTANPYLAFAAMLMAGLDGIQNKIHPGDAMDKDLYDLPPEEEKAIPQVCYSFDQALEALDKDREFLTRGGVFTDDMIDAYLDLKGQEVTRLRMSTHPVEFDMYYSL</sequence>
<accession>P15124</accession>
<accession>Q607S8</accession>
<gene>
    <name evidence="1" type="primary">glnA</name>
    <name type="ordered locus">MCA1677</name>
</gene>
<evidence type="ECO:0000250" key="1">
    <source>
        <dbReference type="UniProtKB" id="P0A1P6"/>
    </source>
</evidence>
<evidence type="ECO:0000250" key="2">
    <source>
        <dbReference type="UniProtKB" id="P12425"/>
    </source>
</evidence>
<evidence type="ECO:0000250" key="3">
    <source>
        <dbReference type="UniProtKB" id="P77961"/>
    </source>
</evidence>
<evidence type="ECO:0000250" key="4">
    <source>
        <dbReference type="UniProtKB" id="P9WN39"/>
    </source>
</evidence>
<evidence type="ECO:0000250" key="5">
    <source>
        <dbReference type="UniProtKB" id="Q3V5W6"/>
    </source>
</evidence>
<evidence type="ECO:0000255" key="6">
    <source>
        <dbReference type="PROSITE-ProRule" id="PRU01330"/>
    </source>
</evidence>
<evidence type="ECO:0000255" key="7">
    <source>
        <dbReference type="PROSITE-ProRule" id="PRU01331"/>
    </source>
</evidence>
<evidence type="ECO:0000305" key="8"/>
<reference key="1">
    <citation type="journal article" date="1990" name="J. Gen. Microbiol.">
        <title>Cloning, sequencing and expression of the glutamine synthetase structural gene (glnA) from the obligate methanotroph Methylococcus capsulatus (Bath).</title>
        <authorList>
            <person name="Cardy D.L.N."/>
            <person name="Murrell J.C."/>
        </authorList>
    </citation>
    <scope>NUCLEOTIDE SEQUENCE [GENOMIC DNA]</scope>
    <source>
        <strain>ATCC 33009 / NCIMB 11132 / Bath</strain>
    </source>
</reference>
<reference key="2">
    <citation type="journal article" date="2004" name="PLoS Biol.">
        <title>Genomic insights into methanotrophy: the complete genome sequence of Methylococcus capsulatus (Bath).</title>
        <authorList>
            <person name="Ward N.L."/>
            <person name="Larsen O."/>
            <person name="Sakwa J."/>
            <person name="Bruseth L."/>
            <person name="Khouri H.M."/>
            <person name="Durkin A.S."/>
            <person name="Dimitrov G."/>
            <person name="Jiang L."/>
            <person name="Scanlan D."/>
            <person name="Kang K.H."/>
            <person name="Lewis M.R."/>
            <person name="Nelson K.E."/>
            <person name="Methe B.A."/>
            <person name="Wu M."/>
            <person name="Heidelberg J.F."/>
            <person name="Paulsen I.T."/>
            <person name="Fouts D.E."/>
            <person name="Ravel J."/>
            <person name="Tettelin H."/>
            <person name="Ren Q."/>
            <person name="Read T.D."/>
            <person name="DeBoy R.T."/>
            <person name="Seshadri R."/>
            <person name="Salzberg S.L."/>
            <person name="Jensen H.B."/>
            <person name="Birkeland N.K."/>
            <person name="Nelson W.C."/>
            <person name="Dodson R.J."/>
            <person name="Grindhaug S.H."/>
            <person name="Holt I.E."/>
            <person name="Eidhammer I."/>
            <person name="Jonasen I."/>
            <person name="Vanaken S."/>
            <person name="Utterback T.R."/>
            <person name="Feldblyum T.V."/>
            <person name="Fraser C.M."/>
            <person name="Lillehaug J.R."/>
            <person name="Eisen J.A."/>
        </authorList>
    </citation>
    <scope>NUCLEOTIDE SEQUENCE [LARGE SCALE GENOMIC DNA]</scope>
    <source>
        <strain>ATCC 33009 / NCIMB 11132 / Bath</strain>
    </source>
</reference>
<feature type="chain" id="PRO_0000153243" description="Glutamine synthetase">
    <location>
        <begin position="1"/>
        <end position="469"/>
    </location>
</feature>
<feature type="domain" description="GS beta-grasp" evidence="6">
    <location>
        <begin position="13"/>
        <end position="97"/>
    </location>
</feature>
<feature type="domain" description="GS catalytic" evidence="7">
    <location>
        <begin position="105"/>
        <end position="469"/>
    </location>
</feature>
<feature type="binding site" evidence="4">
    <location>
        <position position="130"/>
    </location>
    <ligand>
        <name>Mg(2+)</name>
        <dbReference type="ChEBI" id="CHEBI:18420"/>
        <label>1</label>
    </ligand>
</feature>
<feature type="binding site" evidence="4">
    <location>
        <position position="132"/>
    </location>
    <ligand>
        <name>Mg(2+)</name>
        <dbReference type="ChEBI" id="CHEBI:18420"/>
        <label>2</label>
    </ligand>
</feature>
<feature type="binding site" evidence="1">
    <location>
        <position position="208"/>
    </location>
    <ligand>
        <name>ATP</name>
        <dbReference type="ChEBI" id="CHEBI:30616"/>
    </ligand>
</feature>
<feature type="binding site" evidence="4">
    <location>
        <position position="213"/>
    </location>
    <ligand>
        <name>Mg(2+)</name>
        <dbReference type="ChEBI" id="CHEBI:18420"/>
        <label>2</label>
    </ligand>
</feature>
<feature type="binding site" evidence="4">
    <location>
        <position position="221"/>
    </location>
    <ligand>
        <name>Mg(2+)</name>
        <dbReference type="ChEBI" id="CHEBI:18420"/>
        <label>2</label>
    </ligand>
</feature>
<feature type="binding site" evidence="1">
    <location>
        <begin position="265"/>
        <end position="266"/>
    </location>
    <ligand>
        <name>L-glutamate</name>
        <dbReference type="ChEBI" id="CHEBI:29985"/>
    </ligand>
</feature>
<feature type="binding site" evidence="2">
    <location>
        <position position="266"/>
    </location>
    <ligand>
        <name>L-glutamate</name>
        <dbReference type="ChEBI" id="CHEBI:29985"/>
    </ligand>
</feature>
<feature type="binding site" evidence="4">
    <location>
        <position position="270"/>
    </location>
    <ligand>
        <name>Mg(2+)</name>
        <dbReference type="ChEBI" id="CHEBI:18420"/>
        <label>1</label>
    </ligand>
</feature>
<feature type="binding site" evidence="1">
    <location>
        <begin position="272"/>
        <end position="274"/>
    </location>
    <ligand>
        <name>ATP</name>
        <dbReference type="ChEBI" id="CHEBI:30616"/>
    </ligand>
</feature>
<feature type="binding site" evidence="3">
    <location>
        <position position="274"/>
    </location>
    <ligand>
        <name>ATP</name>
        <dbReference type="ChEBI" id="CHEBI:30616"/>
    </ligand>
</feature>
<feature type="binding site" evidence="1">
    <location>
        <position position="322"/>
    </location>
    <ligand>
        <name>L-glutamate</name>
        <dbReference type="ChEBI" id="CHEBI:29985"/>
    </ligand>
</feature>
<feature type="binding site" evidence="1">
    <location>
        <position position="328"/>
    </location>
    <ligand>
        <name>L-glutamate</name>
        <dbReference type="ChEBI" id="CHEBI:29985"/>
    </ligand>
</feature>
<feature type="binding site" evidence="4">
    <location>
        <position position="340"/>
    </location>
    <ligand>
        <name>ATP</name>
        <dbReference type="ChEBI" id="CHEBI:30616"/>
    </ligand>
</feature>
<feature type="binding site" evidence="4">
    <location>
        <position position="340"/>
    </location>
    <ligand>
        <name>L-glutamate</name>
        <dbReference type="ChEBI" id="CHEBI:29985"/>
    </ligand>
</feature>
<feature type="binding site" evidence="4">
    <location>
        <position position="345"/>
    </location>
    <ligand>
        <name>ATP</name>
        <dbReference type="ChEBI" id="CHEBI:30616"/>
    </ligand>
</feature>
<feature type="binding site" evidence="3">
    <location>
        <position position="353"/>
    </location>
    <ligand>
        <name>ATP</name>
        <dbReference type="ChEBI" id="CHEBI:30616"/>
    </ligand>
</feature>
<feature type="binding site" evidence="4">
    <location>
        <position position="358"/>
    </location>
    <ligand>
        <name>Mg(2+)</name>
        <dbReference type="ChEBI" id="CHEBI:18420"/>
        <label>1</label>
    </ligand>
</feature>
<feature type="binding site" evidence="1">
    <location>
        <position position="360"/>
    </location>
    <ligand>
        <name>L-glutamate</name>
        <dbReference type="ChEBI" id="CHEBI:29985"/>
    </ligand>
</feature>
<feature type="modified residue" description="O-AMP-tyrosine" evidence="4">
    <location>
        <position position="398"/>
    </location>
</feature>
<feature type="sequence conflict" description="In Ref. 1; AAA25312." evidence="8" ref="1">
    <original>D</original>
    <variation>A</variation>
    <location>
        <position position="264"/>
    </location>
</feature>
<feature type="sequence conflict" description="In Ref. 1; AAA25312." evidence="8" ref="1">
    <original>L</original>
    <variation>V</variation>
    <location>
        <position position="275"/>
    </location>
</feature>
<feature type="sequence conflict" description="In Ref. 1; AAA25312." evidence="8" ref="1">
    <original>IIKHA</original>
    <variation>YISMP</variation>
    <location>
        <begin position="302"/>
        <end position="306"/>
    </location>
</feature>
<feature type="sequence conflict" description="In Ref. 1; AAA25312." evidence="8" ref="1">
    <original>R</original>
    <variation>G</variation>
    <location>
        <position position="345"/>
    </location>
</feature>
<feature type="sequence conflict" description="In Ref. 1; AAA25312." evidence="8" ref="1">
    <original>RLRMSTHP</original>
    <variation>ACDEHSS</variation>
    <location>
        <begin position="453"/>
        <end position="460"/>
    </location>
</feature>
<dbReference type="EC" id="6.3.1.2" evidence="1"/>
<dbReference type="EMBL" id="M28472">
    <property type="protein sequence ID" value="AAA25312.1"/>
    <property type="molecule type" value="Genomic_DNA"/>
</dbReference>
<dbReference type="EMBL" id="AE017282">
    <property type="protein sequence ID" value="AAU92104.1"/>
    <property type="molecule type" value="Genomic_DNA"/>
</dbReference>
<dbReference type="PIR" id="A37176">
    <property type="entry name" value="A37176"/>
</dbReference>
<dbReference type="RefSeq" id="WP_010960935.1">
    <property type="nucleotide sequence ID" value="NC_002977.6"/>
</dbReference>
<dbReference type="SMR" id="P15124"/>
<dbReference type="STRING" id="243233.MCA1677"/>
<dbReference type="GeneID" id="88223935"/>
<dbReference type="KEGG" id="mca:MCA1677"/>
<dbReference type="eggNOG" id="COG0174">
    <property type="taxonomic scope" value="Bacteria"/>
</dbReference>
<dbReference type="HOGENOM" id="CLU_017290_1_2_6"/>
<dbReference type="Proteomes" id="UP000006821">
    <property type="component" value="Chromosome"/>
</dbReference>
<dbReference type="GO" id="GO:0005737">
    <property type="term" value="C:cytoplasm"/>
    <property type="evidence" value="ECO:0007669"/>
    <property type="project" value="UniProtKB-SubCell"/>
</dbReference>
<dbReference type="GO" id="GO:0016020">
    <property type="term" value="C:membrane"/>
    <property type="evidence" value="ECO:0007669"/>
    <property type="project" value="TreeGrafter"/>
</dbReference>
<dbReference type="GO" id="GO:0005524">
    <property type="term" value="F:ATP binding"/>
    <property type="evidence" value="ECO:0007669"/>
    <property type="project" value="UniProtKB-KW"/>
</dbReference>
<dbReference type="GO" id="GO:0004356">
    <property type="term" value="F:glutamine synthetase activity"/>
    <property type="evidence" value="ECO:0007669"/>
    <property type="project" value="UniProtKB-EC"/>
</dbReference>
<dbReference type="GO" id="GO:0046872">
    <property type="term" value="F:metal ion binding"/>
    <property type="evidence" value="ECO:0007669"/>
    <property type="project" value="UniProtKB-KW"/>
</dbReference>
<dbReference type="GO" id="GO:0006542">
    <property type="term" value="P:glutamine biosynthetic process"/>
    <property type="evidence" value="ECO:0007669"/>
    <property type="project" value="InterPro"/>
</dbReference>
<dbReference type="GO" id="GO:0019740">
    <property type="term" value="P:nitrogen utilization"/>
    <property type="evidence" value="ECO:0007669"/>
    <property type="project" value="TreeGrafter"/>
</dbReference>
<dbReference type="FunFam" id="3.10.20.70:FF:000001">
    <property type="entry name" value="Glutamine synthetase"/>
    <property type="match status" value="1"/>
</dbReference>
<dbReference type="FunFam" id="3.30.590.10:FF:000001">
    <property type="entry name" value="Glutamine synthetase"/>
    <property type="match status" value="1"/>
</dbReference>
<dbReference type="Gene3D" id="3.10.20.70">
    <property type="entry name" value="Glutamine synthetase, N-terminal domain"/>
    <property type="match status" value="1"/>
</dbReference>
<dbReference type="Gene3D" id="3.30.590.10">
    <property type="entry name" value="Glutamine synthetase/guanido kinase, catalytic domain"/>
    <property type="match status" value="1"/>
</dbReference>
<dbReference type="InterPro" id="IPR008147">
    <property type="entry name" value="Gln_synt_N"/>
</dbReference>
<dbReference type="InterPro" id="IPR036651">
    <property type="entry name" value="Gln_synt_N_sf"/>
</dbReference>
<dbReference type="InterPro" id="IPR014746">
    <property type="entry name" value="Gln_synth/guanido_kin_cat_dom"/>
</dbReference>
<dbReference type="InterPro" id="IPR008146">
    <property type="entry name" value="Gln_synth_cat_dom"/>
</dbReference>
<dbReference type="InterPro" id="IPR027303">
    <property type="entry name" value="Gln_synth_gly_rich_site"/>
</dbReference>
<dbReference type="InterPro" id="IPR004809">
    <property type="entry name" value="Gln_synth_I"/>
</dbReference>
<dbReference type="InterPro" id="IPR001637">
    <property type="entry name" value="Gln_synth_I_adenylation_site"/>
</dbReference>
<dbReference type="InterPro" id="IPR027302">
    <property type="entry name" value="Gln_synth_N_conserv_site"/>
</dbReference>
<dbReference type="NCBIfam" id="TIGR00653">
    <property type="entry name" value="GlnA"/>
    <property type="match status" value="1"/>
</dbReference>
<dbReference type="NCBIfam" id="NF007006">
    <property type="entry name" value="PRK09469.1"/>
    <property type="match status" value="1"/>
</dbReference>
<dbReference type="PANTHER" id="PTHR43407">
    <property type="entry name" value="GLUTAMINE SYNTHETASE"/>
    <property type="match status" value="1"/>
</dbReference>
<dbReference type="PANTHER" id="PTHR43407:SF2">
    <property type="entry name" value="GLUTAMINE SYNTHETASE"/>
    <property type="match status" value="1"/>
</dbReference>
<dbReference type="Pfam" id="PF00120">
    <property type="entry name" value="Gln-synt_C"/>
    <property type="match status" value="1"/>
</dbReference>
<dbReference type="Pfam" id="PF03951">
    <property type="entry name" value="Gln-synt_N"/>
    <property type="match status" value="1"/>
</dbReference>
<dbReference type="SMART" id="SM01230">
    <property type="entry name" value="Gln-synt_C"/>
    <property type="match status" value="1"/>
</dbReference>
<dbReference type="SUPFAM" id="SSF54368">
    <property type="entry name" value="Glutamine synthetase, N-terminal domain"/>
    <property type="match status" value="1"/>
</dbReference>
<dbReference type="SUPFAM" id="SSF55931">
    <property type="entry name" value="Glutamine synthetase/guanido kinase"/>
    <property type="match status" value="1"/>
</dbReference>
<dbReference type="PROSITE" id="PS00180">
    <property type="entry name" value="GLNA_1"/>
    <property type="match status" value="1"/>
</dbReference>
<dbReference type="PROSITE" id="PS00182">
    <property type="entry name" value="GLNA_ADENYLATION"/>
    <property type="match status" value="1"/>
</dbReference>
<dbReference type="PROSITE" id="PS00181">
    <property type="entry name" value="GLNA_ATP"/>
    <property type="match status" value="1"/>
</dbReference>
<dbReference type="PROSITE" id="PS51986">
    <property type="entry name" value="GS_BETA_GRASP"/>
    <property type="match status" value="1"/>
</dbReference>
<dbReference type="PROSITE" id="PS51987">
    <property type="entry name" value="GS_CATALYTIC"/>
    <property type="match status" value="1"/>
</dbReference>
<organism>
    <name type="scientific">Methylococcus capsulatus (strain ATCC 33009 / NCIMB 11132 / Bath)</name>
    <dbReference type="NCBI Taxonomy" id="243233"/>
    <lineage>
        <taxon>Bacteria</taxon>
        <taxon>Pseudomonadati</taxon>
        <taxon>Pseudomonadota</taxon>
        <taxon>Gammaproteobacteria</taxon>
        <taxon>Methylococcales</taxon>
        <taxon>Methylococcaceae</taxon>
        <taxon>Methylococcus</taxon>
    </lineage>
</organism>
<name>GLN1B_METCA</name>
<comment type="function">
    <text evidence="1">Catalyzes the ATP-dependent biosynthesis of glutamine from glutamate and ammonia.</text>
</comment>
<comment type="catalytic activity">
    <reaction evidence="1">
        <text>L-glutamate + NH4(+) + ATP = L-glutamine + ADP + phosphate + H(+)</text>
        <dbReference type="Rhea" id="RHEA:16169"/>
        <dbReference type="ChEBI" id="CHEBI:15378"/>
        <dbReference type="ChEBI" id="CHEBI:28938"/>
        <dbReference type="ChEBI" id="CHEBI:29985"/>
        <dbReference type="ChEBI" id="CHEBI:30616"/>
        <dbReference type="ChEBI" id="CHEBI:43474"/>
        <dbReference type="ChEBI" id="CHEBI:58359"/>
        <dbReference type="ChEBI" id="CHEBI:456216"/>
        <dbReference type="EC" id="6.3.1.2"/>
    </reaction>
</comment>
<comment type="cofactor">
    <cofactor evidence="4">
        <name>Mg(2+)</name>
        <dbReference type="ChEBI" id="CHEBI:18420"/>
    </cofactor>
    <text evidence="4">Binds 2 Mg(2+) ions per subunit.</text>
</comment>
<comment type="activity regulation">
    <text evidence="5">The activity of this enzyme could be controlled by adenylation under conditions of abundant glutamine.</text>
</comment>
<comment type="subunit">
    <text evidence="1">Oligomer of 12 subunits arranged in the form of two hexameric ring.</text>
</comment>
<comment type="subcellular location">
    <subcellularLocation>
        <location evidence="4">Cytoplasm</location>
    </subcellularLocation>
</comment>
<comment type="similarity">
    <text evidence="8">Belongs to the glutamine synthetase family.</text>
</comment>